<proteinExistence type="evidence at protein level"/>
<gene>
    <name evidence="1 4" type="primary">hbba</name>
</gene>
<protein>
    <recommendedName>
        <fullName>Hemoglobin subunit beta-A</fullName>
    </recommendedName>
    <alternativeName>
        <fullName>Beta-A-globin</fullName>
    </alternativeName>
    <alternativeName>
        <fullName>Hemoglobin beta-A chain</fullName>
    </alternativeName>
</protein>
<dbReference type="GO" id="GO:0020037">
    <property type="term" value="F:heme binding"/>
    <property type="evidence" value="ECO:0007669"/>
    <property type="project" value="InterPro"/>
</dbReference>
<dbReference type="GO" id="GO:0046872">
    <property type="term" value="F:metal ion binding"/>
    <property type="evidence" value="ECO:0007669"/>
    <property type="project" value="UniProtKB-KW"/>
</dbReference>
<dbReference type="GO" id="GO:0019825">
    <property type="term" value="F:oxygen binding"/>
    <property type="evidence" value="ECO:0007669"/>
    <property type="project" value="InterPro"/>
</dbReference>
<dbReference type="GO" id="GO:0005344">
    <property type="term" value="F:oxygen carrier activity"/>
    <property type="evidence" value="ECO:0007669"/>
    <property type="project" value="UniProtKB-KW"/>
</dbReference>
<dbReference type="Gene3D" id="1.10.490.10">
    <property type="entry name" value="Globins"/>
    <property type="match status" value="1"/>
</dbReference>
<dbReference type="InterPro" id="IPR000971">
    <property type="entry name" value="Globin"/>
</dbReference>
<dbReference type="InterPro" id="IPR009050">
    <property type="entry name" value="Globin-like_sf"/>
</dbReference>
<dbReference type="InterPro" id="IPR012292">
    <property type="entry name" value="Globin/Proto"/>
</dbReference>
<dbReference type="SUPFAM" id="SSF46458">
    <property type="entry name" value="Globin-like"/>
    <property type="match status" value="1"/>
</dbReference>
<dbReference type="PROSITE" id="PS01033">
    <property type="entry name" value="GLOBIN"/>
    <property type="match status" value="1"/>
</dbReference>
<comment type="function">
    <text evidence="5">Involved in oxygen transport from gills to the various peripheral tissues.</text>
</comment>
<comment type="subunit">
    <text evidence="3">Heterotetramer of two alpha chains and two beta chains.</text>
</comment>
<comment type="tissue specificity">
    <text evidence="5">Red blood cells.</text>
</comment>
<comment type="miscellaneous">
    <text evidence="3">This fish has ten hemoglobins, 8 of which are anodal and 2 cathodal. The cathodal tetramers do not exhibit the Bohr effect, due to lack of the C-terminal His in the beta chains and to blocking of the alpha-amino group on the N-terminal residue of the alpha chains. The possession of both anodal and cathodal hemoglobins may be a physiological advantage for fish living in fast-moving water habitats.</text>
</comment>
<comment type="miscellaneous">
    <text evidence="3">This fish possesses 6 types of hemoglobin chains, including a major alpha chain, a minor alpha chain, two major beta chains, and two minor beta chains.</text>
</comment>
<comment type="similarity">
    <text evidence="2">Belongs to the globin family.</text>
</comment>
<keyword id="KW-0903">Direct protein sequencing</keyword>
<keyword id="KW-0349">Heme</keyword>
<keyword id="KW-0408">Iron</keyword>
<keyword id="KW-0479">Metal-binding</keyword>
<keyword id="KW-0561">Oxygen transport</keyword>
<keyword id="KW-0813">Transport</keyword>
<feature type="chain" id="PRO_0000312765" description="Hemoglobin subunit beta-A">
    <location>
        <begin position="1"/>
        <end position="42"/>
    </location>
</feature>
<feature type="domain" description="Globin" evidence="2">
    <location>
        <begin position="2"/>
        <end position="42"/>
    </location>
</feature>
<feature type="non-terminal residue" evidence="4">
    <location>
        <position position="42"/>
    </location>
</feature>
<accession>P85312</accession>
<sequence length="42" mass="4793">VEWTDAERSAILSLWGKIDTDELGPALLARLXLVXXXTQRYF</sequence>
<evidence type="ECO:0000250" key="1">
    <source>
        <dbReference type="UniProtKB" id="P02140"/>
    </source>
</evidence>
<evidence type="ECO:0000255" key="2">
    <source>
        <dbReference type="PROSITE-ProRule" id="PRU00238"/>
    </source>
</evidence>
<evidence type="ECO:0000269" key="3">
    <source>
    </source>
</evidence>
<evidence type="ECO:0000303" key="4">
    <source>
    </source>
</evidence>
<evidence type="ECO:0000305" key="5"/>
<organism>
    <name type="scientific">Catostomus clarkii</name>
    <name type="common">Desert sucker</name>
    <dbReference type="NCBI Taxonomy" id="7970"/>
    <lineage>
        <taxon>Eukaryota</taxon>
        <taxon>Metazoa</taxon>
        <taxon>Chordata</taxon>
        <taxon>Craniata</taxon>
        <taxon>Vertebrata</taxon>
        <taxon>Euteleostomi</taxon>
        <taxon>Actinopterygii</taxon>
        <taxon>Neopterygii</taxon>
        <taxon>Teleostei</taxon>
        <taxon>Ostariophysi</taxon>
        <taxon>Cypriniformes</taxon>
        <taxon>Catostomoidei</taxon>
        <taxon>Catostomidae</taxon>
        <taxon>Pantosteus</taxon>
    </lineage>
</organism>
<reference evidence="5" key="1">
    <citation type="journal article" date="1972" name="J. Biol. Chem.">
        <title>Multiple hemoglobins of catostomid fish. I. Isolation and characterization of the isohemoglobins from Catostomus clarkii.</title>
        <authorList>
            <person name="Powers D.A."/>
            <person name="Edmundson A.B."/>
        </authorList>
    </citation>
    <scope>PROTEIN SEQUENCE</scope>
    <scope>SUBUNIT</scope>
    <source>
        <tissue evidence="3">Blood</tissue>
    </source>
</reference>
<name>HBBA_CATCL</name>